<comment type="function">
    <text>Major subunit of fimbriae. Fimbriae (also called pili), are polar filaments radiating from the surface of the bacterium to a length of 0.5-1.5 micrometers and numbering 100-300 per cell. They enable bacteria to colonize the epithelium of specific host organs.</text>
</comment>
<comment type="subcellular location">
    <subcellularLocation>
        <location>Fimbrium</location>
    </subcellularLocation>
</comment>
<accession>P33781</accession>
<proteinExistence type="evidence at protein level"/>
<name>FMS5_ECOLX</name>
<feature type="signal peptide" evidence="1">
    <location>
        <begin position="1"/>
        <end position="22"/>
    </location>
</feature>
<feature type="chain" id="PRO_0000009186" description="CS5 fimbrial subunit">
    <location>
        <begin position="23"/>
        <end position="203"/>
    </location>
</feature>
<evidence type="ECO:0000269" key="1">
    <source>
    </source>
</evidence>
<keyword id="KW-0903">Direct protein sequencing</keyword>
<keyword id="KW-0281">Fimbrium</keyword>
<keyword id="KW-0614">Plasmid</keyword>
<keyword id="KW-0732">Signal</keyword>
<protein>
    <recommendedName>
        <fullName>CS5 fimbrial subunit</fullName>
    </recommendedName>
    <alternativeName>
        <fullName>CS5 pilin</fullName>
    </alternativeName>
    <alternativeName>
        <fullName>Colonization factor antigen IV</fullName>
        <shortName>CFA/IV</shortName>
    </alternativeName>
    <alternativeName>
        <fullName>PCF8775</fullName>
    </alternativeName>
</protein>
<geneLocation type="plasmid"/>
<sequence length="203" mass="20847">MKKNLLITSVLAMATVSGSVLAAVTNGQLTFNWQGVVPSAPVTQSSWAFVNGLDIPFTPGTEQLNITLDSNKDITARSVKPYDFFIVPVSGNVTPGAPVTRDTSANINSVNAFLSSVPVSNGFVGNKQLTLSTAVEAAKGEVAITLNGQALKVGSASPTVVTVASNKKESHISIDMNAKAAAADVAEGAAINFVAPVTFAVDI</sequence>
<dbReference type="EMBL" id="X63411">
    <property type="protein sequence ID" value="CAA45008.1"/>
    <property type="molecule type" value="Genomic_DNA"/>
</dbReference>
<dbReference type="PIR" id="A43856">
    <property type="entry name" value="A43856"/>
</dbReference>
<dbReference type="RefSeq" id="WP_000739895.1">
    <property type="nucleotide sequence ID" value="NZ_UGCI01000001.1"/>
</dbReference>
<dbReference type="GO" id="GO:0009289">
    <property type="term" value="C:pilus"/>
    <property type="evidence" value="ECO:0007669"/>
    <property type="project" value="UniProtKB-SubCell"/>
</dbReference>
<organism>
    <name type="scientific">Escherichia coli</name>
    <dbReference type="NCBI Taxonomy" id="562"/>
    <lineage>
        <taxon>Bacteria</taxon>
        <taxon>Pseudomonadati</taxon>
        <taxon>Pseudomonadota</taxon>
        <taxon>Gammaproteobacteria</taxon>
        <taxon>Enterobacterales</taxon>
        <taxon>Enterobacteriaceae</taxon>
        <taxon>Escherichia</taxon>
    </lineage>
</organism>
<reference key="1">
    <citation type="journal article" date="1992" name="Infect. Immun.">
        <title>Colonization factor antigen CFA/IV (PCF8775) of human enterotoxigenic Escherichia coli: nucleotide sequence of the CS5 determinant.</title>
        <authorList>
            <person name="Clark C.A."/>
            <person name="Heuzenroeder M.W."/>
            <person name="Manning P.A."/>
        </authorList>
    </citation>
    <scope>NUCLEOTIDE SEQUENCE [GENOMIC DNA]</scope>
    <source>
        <strain>O115:H40 / ETEC</strain>
    </source>
</reference>
<reference key="2">
    <citation type="journal article" date="1989" name="Mol. Microbiol.">
        <title>Characterization and molecular cloning of the PCF8775 CS5 antigen from an enterotoxigenic Escherichia coli 0115:H40 isolated in Central Australia.</title>
        <authorList>
            <person name="Heuzenroeder M.W."/>
            <person name="Elliot T.R."/>
            <person name="Thomas C.J."/>
            <person name="Halter R."/>
            <person name="Manning P.A."/>
        </authorList>
    </citation>
    <scope>PROTEIN SEQUENCE OF 23-52</scope>
    <source>
        <strain>O115:H40 / ETEC</strain>
    </source>
</reference>